<organism>
    <name type="scientific">Shigella boydii serotype 4 (strain Sb227)</name>
    <dbReference type="NCBI Taxonomy" id="300268"/>
    <lineage>
        <taxon>Bacteria</taxon>
        <taxon>Pseudomonadati</taxon>
        <taxon>Pseudomonadota</taxon>
        <taxon>Gammaproteobacteria</taxon>
        <taxon>Enterobacterales</taxon>
        <taxon>Enterobacteriaceae</taxon>
        <taxon>Shigella</taxon>
    </lineage>
</organism>
<evidence type="ECO:0000255" key="1">
    <source>
        <dbReference type="HAMAP-Rule" id="MF_01723"/>
    </source>
</evidence>
<reference key="1">
    <citation type="journal article" date="2005" name="Nucleic Acids Res.">
        <title>Genome dynamics and diversity of Shigella species, the etiologic agents of bacillary dysentery.</title>
        <authorList>
            <person name="Yang F."/>
            <person name="Yang J."/>
            <person name="Zhang X."/>
            <person name="Chen L."/>
            <person name="Jiang Y."/>
            <person name="Yan Y."/>
            <person name="Tang X."/>
            <person name="Wang J."/>
            <person name="Xiong Z."/>
            <person name="Dong J."/>
            <person name="Xue Y."/>
            <person name="Zhu Y."/>
            <person name="Xu X."/>
            <person name="Sun L."/>
            <person name="Chen S."/>
            <person name="Nie H."/>
            <person name="Peng J."/>
            <person name="Xu J."/>
            <person name="Wang Y."/>
            <person name="Yuan Z."/>
            <person name="Wen Y."/>
            <person name="Yao Z."/>
            <person name="Shen Y."/>
            <person name="Qiang B."/>
            <person name="Hou Y."/>
            <person name="Yu J."/>
            <person name="Jin Q."/>
        </authorList>
    </citation>
    <scope>NUCLEOTIDE SEQUENCE [LARGE SCALE GENOMIC DNA]</scope>
    <source>
        <strain>Sb227</strain>
    </source>
</reference>
<feature type="chain" id="PRO_0000274458" description="Thiamine import ATP-binding protein ThiQ">
    <location>
        <begin position="1"/>
        <end position="232"/>
    </location>
</feature>
<feature type="domain" description="ABC transporter" evidence="1">
    <location>
        <begin position="2"/>
        <end position="230"/>
    </location>
</feature>
<feature type="binding site" evidence="1">
    <location>
        <begin position="32"/>
        <end position="39"/>
    </location>
    <ligand>
        <name>ATP</name>
        <dbReference type="ChEBI" id="CHEBI:30616"/>
    </ligand>
</feature>
<keyword id="KW-0067">ATP-binding</keyword>
<keyword id="KW-0997">Cell inner membrane</keyword>
<keyword id="KW-1003">Cell membrane</keyword>
<keyword id="KW-0472">Membrane</keyword>
<keyword id="KW-0547">Nucleotide-binding</keyword>
<keyword id="KW-1278">Translocase</keyword>
<keyword id="KW-0813">Transport</keyword>
<name>THIQ_SHIBS</name>
<comment type="function">
    <text evidence="1">Part of the ABC transporter complex ThiBPQ involved in thiamine import. Responsible for energy coupling to the transport system.</text>
</comment>
<comment type="catalytic activity">
    <reaction evidence="1">
        <text>thiamine(out) + ATP + H2O = thiamine(in) + ADP + phosphate + H(+)</text>
        <dbReference type="Rhea" id="RHEA:29811"/>
        <dbReference type="ChEBI" id="CHEBI:15377"/>
        <dbReference type="ChEBI" id="CHEBI:15378"/>
        <dbReference type="ChEBI" id="CHEBI:18385"/>
        <dbReference type="ChEBI" id="CHEBI:30616"/>
        <dbReference type="ChEBI" id="CHEBI:43474"/>
        <dbReference type="ChEBI" id="CHEBI:456216"/>
        <dbReference type="EC" id="7.6.2.15"/>
    </reaction>
</comment>
<comment type="subunit">
    <text evidence="1">The complex is composed of two ATP-binding proteins (ThiQ), two transmembrane proteins (ThiP) and a solute-binding protein (ThiB).</text>
</comment>
<comment type="subcellular location">
    <subcellularLocation>
        <location evidence="1">Cell inner membrane</location>
        <topology evidence="1">Peripheral membrane protein</topology>
    </subcellularLocation>
</comment>
<comment type="similarity">
    <text evidence="1">Belongs to the ABC transporter superfamily. Thiamine importer (TC 3.A.1.19.1) family.</text>
</comment>
<proteinExistence type="inferred from homology"/>
<dbReference type="EC" id="7.6.2.15" evidence="1"/>
<dbReference type="EMBL" id="CP000036">
    <property type="protein sequence ID" value="ABB64789.1"/>
    <property type="molecule type" value="Genomic_DNA"/>
</dbReference>
<dbReference type="RefSeq" id="WP_000916323.1">
    <property type="nucleotide sequence ID" value="NC_007613.1"/>
</dbReference>
<dbReference type="SMR" id="Q326G9"/>
<dbReference type="KEGG" id="sbo:SBO_0053"/>
<dbReference type="HOGENOM" id="CLU_000604_1_22_6"/>
<dbReference type="Proteomes" id="UP000007067">
    <property type="component" value="Chromosome"/>
</dbReference>
<dbReference type="GO" id="GO:0005886">
    <property type="term" value="C:plasma membrane"/>
    <property type="evidence" value="ECO:0007669"/>
    <property type="project" value="UniProtKB-SubCell"/>
</dbReference>
<dbReference type="GO" id="GO:0048502">
    <property type="term" value="F:ABC-type thiamine transporter activity"/>
    <property type="evidence" value="ECO:0007669"/>
    <property type="project" value="UniProtKB-EC"/>
</dbReference>
<dbReference type="GO" id="GO:0005524">
    <property type="term" value="F:ATP binding"/>
    <property type="evidence" value="ECO:0007669"/>
    <property type="project" value="UniProtKB-KW"/>
</dbReference>
<dbReference type="GO" id="GO:0016887">
    <property type="term" value="F:ATP hydrolysis activity"/>
    <property type="evidence" value="ECO:0007669"/>
    <property type="project" value="InterPro"/>
</dbReference>
<dbReference type="CDD" id="cd03298">
    <property type="entry name" value="ABC_ThiQ_thiamine_transporter"/>
    <property type="match status" value="1"/>
</dbReference>
<dbReference type="FunFam" id="3.40.50.300:FF:001071">
    <property type="entry name" value="Thiamine import ATP-binding protein ThiQ"/>
    <property type="match status" value="1"/>
</dbReference>
<dbReference type="Gene3D" id="3.40.50.300">
    <property type="entry name" value="P-loop containing nucleotide triphosphate hydrolases"/>
    <property type="match status" value="1"/>
</dbReference>
<dbReference type="InterPro" id="IPR003593">
    <property type="entry name" value="AAA+_ATPase"/>
</dbReference>
<dbReference type="InterPro" id="IPR050093">
    <property type="entry name" value="ABC_SmlMolc_Importer"/>
</dbReference>
<dbReference type="InterPro" id="IPR003439">
    <property type="entry name" value="ABC_transporter-like_ATP-bd"/>
</dbReference>
<dbReference type="InterPro" id="IPR017871">
    <property type="entry name" value="ABC_transporter-like_CS"/>
</dbReference>
<dbReference type="InterPro" id="IPR027417">
    <property type="entry name" value="P-loop_NTPase"/>
</dbReference>
<dbReference type="InterPro" id="IPR005968">
    <property type="entry name" value="Thiamine_ABC_ThiQ"/>
</dbReference>
<dbReference type="NCBIfam" id="NF008039">
    <property type="entry name" value="PRK10771.1"/>
    <property type="match status" value="1"/>
</dbReference>
<dbReference type="NCBIfam" id="TIGR01277">
    <property type="entry name" value="thiQ"/>
    <property type="match status" value="1"/>
</dbReference>
<dbReference type="PANTHER" id="PTHR42781">
    <property type="entry name" value="SPERMIDINE/PUTRESCINE IMPORT ATP-BINDING PROTEIN POTA"/>
    <property type="match status" value="1"/>
</dbReference>
<dbReference type="PANTHER" id="PTHR42781:SF1">
    <property type="entry name" value="THIAMINE IMPORT ATP-BINDING PROTEIN THIQ"/>
    <property type="match status" value="1"/>
</dbReference>
<dbReference type="Pfam" id="PF00005">
    <property type="entry name" value="ABC_tran"/>
    <property type="match status" value="1"/>
</dbReference>
<dbReference type="SMART" id="SM00382">
    <property type="entry name" value="AAA"/>
    <property type="match status" value="1"/>
</dbReference>
<dbReference type="SUPFAM" id="SSF52540">
    <property type="entry name" value="P-loop containing nucleoside triphosphate hydrolases"/>
    <property type="match status" value="1"/>
</dbReference>
<dbReference type="PROSITE" id="PS00211">
    <property type="entry name" value="ABC_TRANSPORTER_1"/>
    <property type="match status" value="1"/>
</dbReference>
<dbReference type="PROSITE" id="PS50893">
    <property type="entry name" value="ABC_TRANSPORTER_2"/>
    <property type="match status" value="1"/>
</dbReference>
<dbReference type="PROSITE" id="PS51288">
    <property type="entry name" value="THIQ"/>
    <property type="match status" value="1"/>
</dbReference>
<accession>Q326G9</accession>
<protein>
    <recommendedName>
        <fullName evidence="1">Thiamine import ATP-binding protein ThiQ</fullName>
        <ecNumber evidence="1">7.6.2.15</ecNumber>
    </recommendedName>
</protein>
<sequence>MLKLTDITWLYQHLPMRFSLTVERGEQVAILGPSGAGKSTLLNLIAGFLTPASGSLTIDGVDHTTTPPSRRPVSMLFQENNLFSHLTVAQNIGLGLNPGLKLNAAQQEKMHAIARQMGIDNLMARLPGELSGGQRQRVALARCLVREQPILLLDEPFSALDPALRQEMLTLVSTSCQQQKMTLLMVSHSVEDAARIATRSVVVADGRIAWQGKTEELLSGKASASAILGITG</sequence>
<gene>
    <name evidence="1" type="primary">thiQ</name>
    <name type="ordered locus">SBO_0053</name>
</gene>